<proteinExistence type="evidence at protein level"/>
<accession>Q0WSX8</accession>
<accession>Q9FLA6</accession>
<dbReference type="EC" id="3.2.2.6" evidence="2"/>
<dbReference type="EMBL" id="AB010693">
    <property type="protein sequence ID" value="BAB10874.1"/>
    <property type="status" value="ALT_SEQ"/>
    <property type="molecule type" value="Genomic_DNA"/>
</dbReference>
<dbReference type="EMBL" id="CP002688">
    <property type="protein sequence ID" value="AED95174.1"/>
    <property type="molecule type" value="Genomic_DNA"/>
</dbReference>
<dbReference type="EMBL" id="AK227788">
    <property type="protein sequence ID" value="BAE99770.1"/>
    <property type="molecule type" value="mRNA"/>
</dbReference>
<dbReference type="RefSeq" id="NP_851131.1">
    <property type="nucleotide sequence ID" value="NM_180800.2"/>
</dbReference>
<dbReference type="SMR" id="Q0WSX8"/>
<dbReference type="FunCoup" id="Q0WSX8">
    <property type="interactions" value="27"/>
</dbReference>
<dbReference type="STRING" id="3702.Q0WSX8"/>
<dbReference type="iPTMnet" id="Q0WSX8"/>
<dbReference type="SwissPalm" id="Q0WSX8"/>
<dbReference type="PaxDb" id="3702-AT5G44920.1"/>
<dbReference type="EnsemblPlants" id="AT5G44920.1">
    <property type="protein sequence ID" value="AT5G44920.1"/>
    <property type="gene ID" value="AT5G44920"/>
</dbReference>
<dbReference type="GeneID" id="834522"/>
<dbReference type="Gramene" id="AT5G44920.1">
    <property type="protein sequence ID" value="AT5G44920.1"/>
    <property type="gene ID" value="AT5G44920"/>
</dbReference>
<dbReference type="KEGG" id="ath:AT5G44920"/>
<dbReference type="Araport" id="AT5G44920"/>
<dbReference type="TAIR" id="AT5G44920">
    <property type="gene designation" value="TIK"/>
</dbReference>
<dbReference type="InParanoid" id="Q0WSX8"/>
<dbReference type="OMA" id="NSWDGWY"/>
<dbReference type="PhylomeDB" id="Q0WSX8"/>
<dbReference type="PRO" id="PR:Q0WSX8"/>
<dbReference type="Proteomes" id="UP000006548">
    <property type="component" value="Chromosome 5"/>
</dbReference>
<dbReference type="ExpressionAtlas" id="Q0WSX8">
    <property type="expression patterns" value="baseline and differential"/>
</dbReference>
<dbReference type="GO" id="GO:0005783">
    <property type="term" value="C:endoplasmic reticulum"/>
    <property type="evidence" value="ECO:0007005"/>
    <property type="project" value="TAIR"/>
</dbReference>
<dbReference type="GO" id="GO:0005635">
    <property type="term" value="C:nuclear envelope"/>
    <property type="evidence" value="ECO:0000314"/>
    <property type="project" value="UniProtKB"/>
</dbReference>
<dbReference type="GO" id="GO:0031965">
    <property type="term" value="C:nuclear membrane"/>
    <property type="evidence" value="ECO:0007669"/>
    <property type="project" value="UniProtKB-SubCell"/>
</dbReference>
<dbReference type="GO" id="GO:0061809">
    <property type="term" value="F:NAD+ nucleosidase activity, cyclic ADP-ribose generating"/>
    <property type="evidence" value="ECO:0007669"/>
    <property type="project" value="UniProtKB-EC"/>
</dbReference>
<dbReference type="GO" id="GO:0007165">
    <property type="term" value="P:signal transduction"/>
    <property type="evidence" value="ECO:0007669"/>
    <property type="project" value="InterPro"/>
</dbReference>
<dbReference type="FunFam" id="3.40.50.10140:FF:000007">
    <property type="entry name" value="Disease resistance protein (TIR-NBS-LRR class)"/>
    <property type="match status" value="1"/>
</dbReference>
<dbReference type="Gene3D" id="3.40.50.10140">
    <property type="entry name" value="Toll/interleukin-1 receptor homology (TIR) domain"/>
    <property type="match status" value="1"/>
</dbReference>
<dbReference type="InterPro" id="IPR000157">
    <property type="entry name" value="TIR_dom"/>
</dbReference>
<dbReference type="InterPro" id="IPR035897">
    <property type="entry name" value="Toll_tir_struct_dom_sf"/>
</dbReference>
<dbReference type="PANTHER" id="PTHR32009:SF57">
    <property type="entry name" value="TIR DOMAIN-CONTAINING PROTEIN"/>
    <property type="match status" value="1"/>
</dbReference>
<dbReference type="PANTHER" id="PTHR32009">
    <property type="entry name" value="TMV RESISTANCE PROTEIN N-LIKE"/>
    <property type="match status" value="1"/>
</dbReference>
<dbReference type="Pfam" id="PF01582">
    <property type="entry name" value="TIR"/>
    <property type="match status" value="1"/>
</dbReference>
<dbReference type="SMART" id="SM00255">
    <property type="entry name" value="TIR"/>
    <property type="match status" value="1"/>
</dbReference>
<dbReference type="SUPFAM" id="SSF52200">
    <property type="entry name" value="Toll/Interleukin receptor TIR domain"/>
    <property type="match status" value="1"/>
</dbReference>
<dbReference type="PROSITE" id="PS50104">
    <property type="entry name" value="TIR"/>
    <property type="match status" value="1"/>
</dbReference>
<keyword id="KW-0378">Hydrolase</keyword>
<keyword id="KW-0472">Membrane</keyword>
<keyword id="KW-0520">NAD</keyword>
<keyword id="KW-0539">Nucleus</keyword>
<keyword id="KW-1185">Reference proteome</keyword>
<keyword id="KW-0812">Transmembrane</keyword>
<keyword id="KW-1133">Transmembrane helix</keyword>
<reference key="1">
    <citation type="journal article" date="1998" name="DNA Res.">
        <title>Structural analysis of Arabidopsis thaliana chromosome 5. V. Sequence features of the regions of 1,381,565 bp covered by twenty one physically assigned P1 and TAC clones.</title>
        <authorList>
            <person name="Kaneko T."/>
            <person name="Kotani H."/>
            <person name="Nakamura Y."/>
            <person name="Sato S."/>
            <person name="Asamizu E."/>
            <person name="Miyajima N."/>
            <person name="Tabata S."/>
        </authorList>
    </citation>
    <scope>NUCLEOTIDE SEQUENCE [LARGE SCALE GENOMIC DNA]</scope>
    <source>
        <strain>cv. Columbia</strain>
    </source>
</reference>
<reference key="2">
    <citation type="journal article" date="2017" name="Plant J.">
        <title>Araport11: a complete reannotation of the Arabidopsis thaliana reference genome.</title>
        <authorList>
            <person name="Cheng C.Y."/>
            <person name="Krishnakumar V."/>
            <person name="Chan A.P."/>
            <person name="Thibaud-Nissen F."/>
            <person name="Schobel S."/>
            <person name="Town C.D."/>
        </authorList>
    </citation>
    <scope>GENOME REANNOTATION</scope>
    <source>
        <strain>cv. Columbia</strain>
    </source>
</reference>
<reference key="3">
    <citation type="submission" date="2006-07" db="EMBL/GenBank/DDBJ databases">
        <title>Large-scale analysis of RIKEN Arabidopsis full-length (RAFL) cDNAs.</title>
        <authorList>
            <person name="Totoki Y."/>
            <person name="Seki M."/>
            <person name="Ishida J."/>
            <person name="Nakajima M."/>
            <person name="Enju A."/>
            <person name="Kamiya A."/>
            <person name="Narusaka M."/>
            <person name="Shin-i T."/>
            <person name="Nakagawa M."/>
            <person name="Sakamoto N."/>
            <person name="Oishi K."/>
            <person name="Kohara Y."/>
            <person name="Kobayashi M."/>
            <person name="Toyoda A."/>
            <person name="Sakaki Y."/>
            <person name="Sakurai T."/>
            <person name="Iida K."/>
            <person name="Akiyama K."/>
            <person name="Satou M."/>
            <person name="Toyoda T."/>
            <person name="Konagaya A."/>
            <person name="Carninci P."/>
            <person name="Kawai J."/>
            <person name="Hayashizaki Y."/>
            <person name="Shinozaki K."/>
        </authorList>
    </citation>
    <scope>NUCLEOTIDE SEQUENCE [LARGE SCALE MRNA]</scope>
    <source>
        <strain>cv. Columbia</strain>
    </source>
</reference>
<reference key="4">
    <citation type="journal article" date="2014" name="J. Exp. Bot.">
        <title>Characterization of two distinct subfamilies of SUN-domain proteins in Arabidopsis and their interactions with the novel KASH-domain protein AtTIK.</title>
        <authorList>
            <person name="Graumann K."/>
            <person name="Vanrobays E."/>
            <person name="Tutois S."/>
            <person name="Probst A.V."/>
            <person name="Evans D.E."/>
            <person name="Tatout C."/>
        </authorList>
    </citation>
    <scope>FUNCTION</scope>
    <scope>SUBUNIT</scope>
    <scope>SUBCELLULAR LOCATION</scope>
    <scope>INTERACTION WITH SUN1; SUN2; SUN3; SUN4 AND SUN5</scope>
    <scope>DISRUPTION PHENOTYPE</scope>
</reference>
<reference key="5">
    <citation type="journal article" date="2015" name="J. Exp. Bot.">
        <title>The plant nuclear envelope as a multifunctional platform LINCed by SUN and KASH.</title>
        <authorList>
            <person name="Zhou X."/>
            <person name="Graumann K."/>
            <person name="Meier I."/>
        </authorList>
    </citation>
    <scope>REVIEW</scope>
</reference>
<organism>
    <name type="scientific">Arabidopsis thaliana</name>
    <name type="common">Mouse-ear cress</name>
    <dbReference type="NCBI Taxonomy" id="3702"/>
    <lineage>
        <taxon>Eukaryota</taxon>
        <taxon>Viridiplantae</taxon>
        <taxon>Streptophyta</taxon>
        <taxon>Embryophyta</taxon>
        <taxon>Tracheophyta</taxon>
        <taxon>Spermatophyta</taxon>
        <taxon>Magnoliopsida</taxon>
        <taxon>eudicotyledons</taxon>
        <taxon>Gunneridae</taxon>
        <taxon>Pentapetalae</taxon>
        <taxon>rosids</taxon>
        <taxon>malvids</taxon>
        <taxon>Brassicales</taxon>
        <taxon>Brassicaceae</taxon>
        <taxon>Camelineae</taxon>
        <taxon>Arabidopsis</taxon>
    </lineage>
</organism>
<evidence type="ECO:0000255" key="1"/>
<evidence type="ECO:0000255" key="2">
    <source>
        <dbReference type="PROSITE-ProRule" id="PRU00204"/>
    </source>
</evidence>
<evidence type="ECO:0000269" key="3">
    <source>
    </source>
</evidence>
<evidence type="ECO:0000303" key="4">
    <source>
    </source>
</evidence>
<evidence type="ECO:0000305" key="5"/>
<evidence type="ECO:0000305" key="6">
    <source>
    </source>
</evidence>
<evidence type="ECO:0000312" key="7">
    <source>
        <dbReference type="Araport" id="AT5G44920"/>
    </source>
</evidence>
<evidence type="ECO:0000312" key="8">
    <source>
        <dbReference type="EMBL" id="BAB10874.1"/>
    </source>
</evidence>
<gene>
    <name evidence="4" type="primary">TIK</name>
    <name evidence="7" type="ordered locus">At5g44920</name>
    <name evidence="8" type="ORF">K21C13.10</name>
</gene>
<feature type="chain" id="PRO_0000441685" description="TIR domain-containing protein">
    <location>
        <begin position="1"/>
        <end position="255"/>
    </location>
</feature>
<feature type="transmembrane region" description="Helical" evidence="1">
    <location>
        <begin position="195"/>
        <end position="215"/>
    </location>
</feature>
<feature type="transmembrane region" description="Helical" evidence="1">
    <location>
        <begin position="223"/>
        <end position="243"/>
    </location>
</feature>
<feature type="domain" description="TIR" evidence="2">
    <location>
        <begin position="9"/>
        <end position="185"/>
    </location>
</feature>
<feature type="domain" description="KASH" evidence="6">
    <location>
        <begin position="201"/>
        <end position="255"/>
    </location>
</feature>
<feature type="active site" evidence="2">
    <location>
        <position position="83"/>
    </location>
</feature>
<name>TIK_ARATH</name>
<comment type="function">
    <text evidence="3">Could play a role in nuclear morphology, specifically nuclear size.</text>
</comment>
<comment type="catalytic activity">
    <reaction evidence="2">
        <text>NAD(+) + H2O = ADP-D-ribose + nicotinamide + H(+)</text>
        <dbReference type="Rhea" id="RHEA:16301"/>
        <dbReference type="ChEBI" id="CHEBI:15377"/>
        <dbReference type="ChEBI" id="CHEBI:15378"/>
        <dbReference type="ChEBI" id="CHEBI:17154"/>
        <dbReference type="ChEBI" id="CHEBI:57540"/>
        <dbReference type="ChEBI" id="CHEBI:57967"/>
        <dbReference type="EC" id="3.2.2.6"/>
    </reaction>
    <physiologicalReaction direction="left-to-right" evidence="2">
        <dbReference type="Rhea" id="RHEA:16302"/>
    </physiologicalReaction>
</comment>
<comment type="subunit">
    <text evidence="3">Forms homomers. Interacts with SUN1, SUN2, SUN3, SUN4 and SUN5.</text>
</comment>
<comment type="subcellular location">
    <subcellularLocation>
        <location evidence="3">Nucleus membrane</location>
        <topology evidence="1">Multi-pass membrane protein</topology>
    </subcellularLocation>
</comment>
<comment type="domain">
    <text evidence="6">The KASH domain, which contains a transmembrane domain, mediates the nuclear envelope targeting and is involved in the binding to the SUN proteins.</text>
</comment>
<comment type="domain">
    <text evidence="2">The TIR domain mediates NAD(+) hydrolase (NADase) activity. Self-association of TIR domains is required for NADase activity.</text>
</comment>
<comment type="disruption phenotype">
    <text evidence="3">Shorter roots.</text>
</comment>
<comment type="sequence caution" evidence="5">
    <conflict type="erroneous gene model prediction">
        <sequence resource="EMBL-CDS" id="BAB10874"/>
    </conflict>
</comment>
<sequence length="255" mass="29699">MDEQVQEPLSDQVFINFRGDELREIFVNHLELQLRNAGINVFIDTKEQKGRRLQYLFTRIKKSKIALAIFSKRYCESKWCLDELVTMNEQMKEKKLVVIPIFYNVRSDDVKRAANPDGEGNLDGEFSLPFKQLKQNHAGEPERVEGWERALRSVTKRIGFSRSNSKYKHDTDFVLDIVKEVKKQLNIPTDNSWSAIGVAFLAITINLIFSFFIAPKYLPDQKFFQTPEWFIGTLAVVLASWFWYKNNQNKAPPPS</sequence>
<protein>
    <recommendedName>
        <fullName evidence="5">TIR domain-containing protein</fullName>
        <ecNumber evidence="2">3.2.2.6</ecNumber>
    </recommendedName>
    <alternativeName>
        <fullName evidence="4">AtTIK</fullName>
    </alternativeName>
    <alternativeName>
        <fullName evidence="4">TIR-KASH protein</fullName>
    </alternativeName>
</protein>